<dbReference type="EC" id="2.4.1.215"/>
<dbReference type="EMBL" id="AF318075">
    <property type="protein sequence ID" value="AAK53551.1"/>
    <property type="molecule type" value="mRNA"/>
</dbReference>
<dbReference type="EMBL" id="AF466203">
    <property type="protein sequence ID" value="AAL75980.1"/>
    <property type="status" value="ALT_INIT"/>
    <property type="molecule type" value="Genomic_DNA"/>
</dbReference>
<dbReference type="RefSeq" id="NP_001105017.1">
    <property type="nucleotide sequence ID" value="NM_001111547.2"/>
</dbReference>
<dbReference type="SMR" id="Q93XP7"/>
<dbReference type="FunCoup" id="Q93XP7">
    <property type="interactions" value="31"/>
</dbReference>
<dbReference type="STRING" id="4577.Q93XP7"/>
<dbReference type="CAZy" id="GT1">
    <property type="family name" value="Glycosyltransferase Family 1"/>
</dbReference>
<dbReference type="PaxDb" id="4577-GRMZM2G168474_P01"/>
<dbReference type="EnsemblPlants" id="Zm00001eb074330_T001">
    <property type="protein sequence ID" value="Zm00001eb074330_P001"/>
    <property type="gene ID" value="Zm00001eb074330"/>
</dbReference>
<dbReference type="GeneID" id="541881"/>
<dbReference type="Gramene" id="Zm00001eb074330_T001">
    <property type="protein sequence ID" value="Zm00001eb074330_P001"/>
    <property type="gene ID" value="Zm00001eb074330"/>
</dbReference>
<dbReference type="KEGG" id="zma:541881"/>
<dbReference type="MaizeGDB" id="403574"/>
<dbReference type="eggNOG" id="KOG1192">
    <property type="taxonomic scope" value="Eukaryota"/>
</dbReference>
<dbReference type="HOGENOM" id="CLU_001724_2_1_1"/>
<dbReference type="InParanoid" id="Q93XP7"/>
<dbReference type="OMA" id="HASNKFP"/>
<dbReference type="OrthoDB" id="5835829at2759"/>
<dbReference type="BioCyc" id="MetaCyc:CISZOG1-MONOMER"/>
<dbReference type="BRENDA" id="2.4.1.215">
    <property type="organism ID" value="6752"/>
</dbReference>
<dbReference type="SABIO-RK" id="Q93XP7"/>
<dbReference type="Proteomes" id="UP000007305">
    <property type="component" value="Chromosome 2"/>
</dbReference>
<dbReference type="ExpressionAtlas" id="Q93XP7">
    <property type="expression patterns" value="baseline and differential"/>
</dbReference>
<dbReference type="GO" id="GO:0050502">
    <property type="term" value="F:cis-zeatin O-beta-D-glucosyltransferase activity"/>
    <property type="evidence" value="ECO:0000314"/>
    <property type="project" value="AgBase"/>
</dbReference>
<dbReference type="GO" id="GO:0035251">
    <property type="term" value="F:UDP-glucosyltransferase activity"/>
    <property type="evidence" value="ECO:0000318"/>
    <property type="project" value="GO_Central"/>
</dbReference>
<dbReference type="GO" id="GO:0009690">
    <property type="term" value="P:cytokinin metabolic process"/>
    <property type="evidence" value="ECO:0000304"/>
    <property type="project" value="AgBase"/>
</dbReference>
<dbReference type="GO" id="GO:0006486">
    <property type="term" value="P:protein glycosylation"/>
    <property type="evidence" value="ECO:0000314"/>
    <property type="project" value="AgBase"/>
</dbReference>
<dbReference type="GO" id="GO:0080036">
    <property type="term" value="P:regulation of cytokinin-activated signaling pathway"/>
    <property type="evidence" value="ECO:0000304"/>
    <property type="project" value="AgBase"/>
</dbReference>
<dbReference type="GO" id="GO:0010817">
    <property type="term" value="P:regulation of hormone levels"/>
    <property type="evidence" value="ECO:0000304"/>
    <property type="project" value="AgBase"/>
</dbReference>
<dbReference type="CDD" id="cd03784">
    <property type="entry name" value="GT1_Gtf-like"/>
    <property type="match status" value="1"/>
</dbReference>
<dbReference type="FunFam" id="3.40.50.2000:FF:000060">
    <property type="entry name" value="Glycosyltransferase"/>
    <property type="match status" value="1"/>
</dbReference>
<dbReference type="FunFam" id="3.40.50.2000:FF:000117">
    <property type="entry name" value="Glycosyltransferase"/>
    <property type="match status" value="1"/>
</dbReference>
<dbReference type="Gene3D" id="3.40.50.2000">
    <property type="entry name" value="Glycogen Phosphorylase B"/>
    <property type="match status" value="3"/>
</dbReference>
<dbReference type="InterPro" id="IPR002213">
    <property type="entry name" value="UDP_glucos_trans"/>
</dbReference>
<dbReference type="InterPro" id="IPR035595">
    <property type="entry name" value="UDP_glycos_trans_CS"/>
</dbReference>
<dbReference type="PANTHER" id="PTHR48044:SF64">
    <property type="entry name" value="CIS-ZEATIN O-GLUCOSYLTRANSFERASE 1"/>
    <property type="match status" value="1"/>
</dbReference>
<dbReference type="PANTHER" id="PTHR48044">
    <property type="entry name" value="GLYCOSYLTRANSFERASE"/>
    <property type="match status" value="1"/>
</dbReference>
<dbReference type="Pfam" id="PF00201">
    <property type="entry name" value="UDPGT"/>
    <property type="match status" value="1"/>
</dbReference>
<dbReference type="SUPFAM" id="SSF53756">
    <property type="entry name" value="UDP-Glycosyltransferase/glycogen phosphorylase"/>
    <property type="match status" value="1"/>
</dbReference>
<dbReference type="PROSITE" id="PS00375">
    <property type="entry name" value="UDPGT"/>
    <property type="match status" value="1"/>
</dbReference>
<feature type="chain" id="PRO_0000074167" description="Cis-zeatin O-glucosyltransferase 1">
    <location>
        <begin position="1"/>
        <end position="467"/>
    </location>
</feature>
<feature type="active site" description="Proton acceptor" evidence="1">
    <location>
        <position position="21"/>
    </location>
</feature>
<feature type="active site" description="Charge relay" evidence="1">
    <location>
        <position position="127"/>
    </location>
</feature>
<feature type="binding site" evidence="2">
    <location>
        <position position="21"/>
    </location>
    <ligand>
        <name>an anthocyanidin</name>
        <dbReference type="ChEBI" id="CHEBI:143576"/>
    </ligand>
</feature>
<feature type="binding site" evidence="2">
    <location>
        <position position="91"/>
    </location>
    <ligand>
        <name>an anthocyanidin</name>
        <dbReference type="ChEBI" id="CHEBI:143576"/>
    </ligand>
</feature>
<feature type="binding site" evidence="1">
    <location>
        <position position="343"/>
    </location>
    <ligand>
        <name>UDP-alpha-D-glucose</name>
        <dbReference type="ChEBI" id="CHEBI:58885"/>
    </ligand>
</feature>
<feature type="binding site" evidence="1">
    <location>
        <position position="345"/>
    </location>
    <ligand>
        <name>UDP-alpha-D-glucose</name>
        <dbReference type="ChEBI" id="CHEBI:58885"/>
    </ligand>
</feature>
<feature type="binding site" evidence="1">
    <location>
        <position position="360"/>
    </location>
    <ligand>
        <name>UDP-alpha-D-glucose</name>
        <dbReference type="ChEBI" id="CHEBI:58885"/>
    </ligand>
</feature>
<feature type="binding site" evidence="1">
    <location>
        <position position="363"/>
    </location>
    <ligand>
        <name>UDP-alpha-D-glucose</name>
        <dbReference type="ChEBI" id="CHEBI:58885"/>
    </ligand>
</feature>
<feature type="binding site" evidence="1">
    <location>
        <position position="364"/>
    </location>
    <ligand>
        <name>UDP-alpha-D-glucose</name>
        <dbReference type="ChEBI" id="CHEBI:58885"/>
    </ligand>
</feature>
<feature type="binding site" evidence="1">
    <location>
        <position position="365"/>
    </location>
    <ligand>
        <name>UDP-alpha-D-glucose</name>
        <dbReference type="ChEBI" id="CHEBI:58885"/>
    </ligand>
</feature>
<feature type="binding site" evidence="1">
    <location>
        <position position="368"/>
    </location>
    <ligand>
        <name>UDP-alpha-D-glucose</name>
        <dbReference type="ChEBI" id="CHEBI:58885"/>
    </ligand>
</feature>
<feature type="binding site" evidence="1">
    <location>
        <position position="384"/>
    </location>
    <ligand>
        <name>UDP-alpha-D-glucose</name>
        <dbReference type="ChEBI" id="CHEBI:58885"/>
    </ligand>
</feature>
<feature type="binding site" evidence="1">
    <location>
        <position position="385"/>
    </location>
    <ligand>
        <name>UDP-alpha-D-glucose</name>
        <dbReference type="ChEBI" id="CHEBI:58885"/>
    </ligand>
</feature>
<protein>
    <recommendedName>
        <fullName>Cis-zeatin O-glucosyltransferase 1</fullName>
        <shortName>cisZOG1</shortName>
        <ecNumber>2.4.1.215</ecNumber>
    </recommendedName>
</protein>
<name>CZOG1_MAIZE</name>
<evidence type="ECO:0000250" key="1">
    <source>
        <dbReference type="UniProtKB" id="A0A0A1HA03"/>
    </source>
</evidence>
<evidence type="ECO:0000250" key="2">
    <source>
        <dbReference type="UniProtKB" id="P51094"/>
    </source>
</evidence>
<evidence type="ECO:0000269" key="3">
    <source>
    </source>
</evidence>
<evidence type="ECO:0000269" key="4">
    <source>
    </source>
</evidence>
<evidence type="ECO:0000305" key="5"/>
<proteinExistence type="evidence at protein level"/>
<sequence>MAVDTMESVAVVAVPFPAQGHLNQLLHLSLLLASRGLSVHYAAPPPHVRQARARVHGWDPRALGSIRFHDLDVPPYDSPAPDLAAPSPFPNHLMPMFEAFAAAARAPLAALLQRLSTSYRRVAVVFDRLNPFAATEAARLANADAFGLQCVAISYNVGWLDPGHRLLSDYGLQFLPPDACMSREFVDLVFRMEEEEQGAPVAGLVMNTCRALEGEFLDVVAAQPPFQGQRFFAVGPLNPLLLDADAPTTPPGQARHECLEWLDRQPPESVLYVSFGTTSCLHADQVAELAAALKGSKQRFVWVLRDADRADIYAESGESRHAMFLSEFTRETEGTGLVITGWAPQLEILAHGATAAFMSHCGWNSTIESLSHGKPVLAWPMHSDQPWDSELLCKYFKAGLLVRPWEKHAEIVPAQAIQKVIEEAMLSDSGMAVRQRAKELGEAVRASVADGGNSRKDLDDFIGYITR</sequence>
<keyword id="KW-0328">Glycosyltransferase</keyword>
<keyword id="KW-1185">Reference proteome</keyword>
<keyword id="KW-0808">Transferase</keyword>
<comment type="function">
    <text>Utilizes UDP-glucose as the sugar donor and catalyzes the formation of O-beta-D-glucosyl-cis-zeatin from cis-zeatin. May regulate active versus storage forms of cytokinins and could have an impact on seed growth.</text>
</comment>
<comment type="catalytic activity">
    <reaction evidence="3">
        <text>cis-zeatin + UDP-alpha-D-glucose = O-beta-D-glucosyl-cis-zeatin + UDP + H(+)</text>
        <dbReference type="Rhea" id="RHEA:20681"/>
        <dbReference type="ChEBI" id="CHEBI:15378"/>
        <dbReference type="ChEBI" id="CHEBI:29043"/>
        <dbReference type="ChEBI" id="CHEBI:46570"/>
        <dbReference type="ChEBI" id="CHEBI:58223"/>
        <dbReference type="ChEBI" id="CHEBI:58885"/>
        <dbReference type="EC" id="2.4.1.215"/>
    </reaction>
</comment>
<comment type="biophysicochemical properties">
    <kinetics>
        <KM evidence="4">46 uM for cis-zeatin</KM>
    </kinetics>
    <phDependence>
        <text evidence="4">Optimum pH is 7.5.</text>
    </phDependence>
</comment>
<comment type="tissue specificity">
    <text evidence="3 4">Highly expressed in root. Expressed at lower level in kernel and cob. Weakly expressed in leaves. Weakly or not expressed in stems.</text>
</comment>
<comment type="similarity">
    <text evidence="5">Belongs to the UDP-glycosyltransferase family.</text>
</comment>
<comment type="sequence caution" evidence="5">
    <conflict type="erroneous initiation">
        <sequence resource="EMBL-CDS" id="AAL75980"/>
    </conflict>
</comment>
<accession>Q93XP7</accession>
<accession>Q8S465</accession>
<reference key="1">
    <citation type="journal article" date="2001" name="Proc. Natl. Acad. Sci. U.S.A.">
        <title>A maize cytokinin gene encoding an O-glucosyltransferase specific to cis-zeatin.</title>
        <authorList>
            <person name="Martin R.C."/>
            <person name="Mok M.C."/>
            <person name="Habben J.E."/>
            <person name="Mok D.W.S."/>
        </authorList>
    </citation>
    <scope>NUCLEOTIDE SEQUENCE [MRNA]</scope>
    <scope>ENZYME ACTIVITY</scope>
    <scope>TISSUE SPECIFICITY</scope>
    <source>
        <tissue>Kernel</tissue>
    </source>
</reference>
<reference key="2">
    <citation type="journal article" date="2005" name="Genetics">
        <title>Structure and evolution of the r/b chromosomal regions in rice, maize, and sorghum.</title>
        <authorList>
            <person name="Swigonova Z."/>
            <person name="Bennetzen J.L."/>
            <person name="Messing J."/>
        </authorList>
    </citation>
    <scope>NUCLEOTIDE SEQUENCE [GENOMIC DNA]</scope>
</reference>
<reference key="3">
    <citation type="journal article" date="2003" name="Plant Physiol.">
        <title>O-glucosylation of cis-zeatin in maize. Characterization of genes, enzymes, and endogenous cytokinins.</title>
        <authorList>
            <person name="Veach Y.K."/>
            <person name="Martin R.C."/>
            <person name="Mok D.W.S."/>
            <person name="Malbeck J."/>
            <person name="Vankova R."/>
            <person name="Mok M.C."/>
        </authorList>
    </citation>
    <scope>TISSUE SPECIFICITY</scope>
    <scope>BIOPHYSICOCHEMICAL PROPERTIES</scope>
</reference>
<organism>
    <name type="scientific">Zea mays</name>
    <name type="common">Maize</name>
    <dbReference type="NCBI Taxonomy" id="4577"/>
    <lineage>
        <taxon>Eukaryota</taxon>
        <taxon>Viridiplantae</taxon>
        <taxon>Streptophyta</taxon>
        <taxon>Embryophyta</taxon>
        <taxon>Tracheophyta</taxon>
        <taxon>Spermatophyta</taxon>
        <taxon>Magnoliopsida</taxon>
        <taxon>Liliopsida</taxon>
        <taxon>Poales</taxon>
        <taxon>Poaceae</taxon>
        <taxon>PACMAD clade</taxon>
        <taxon>Panicoideae</taxon>
        <taxon>Andropogonodae</taxon>
        <taxon>Andropogoneae</taxon>
        <taxon>Tripsacinae</taxon>
        <taxon>Zea</taxon>
    </lineage>
</organism>
<gene>
    <name type="primary">CISZOG1</name>
    <name type="ORF">Z092E12.11</name>
</gene>